<protein>
    <recommendedName>
        <fullName>Calpain-D</fullName>
        <ecNumber>3.4.22.-</ecNumber>
    </recommendedName>
    <alternativeName>
        <fullName>Calcium-activated neutral proteinase D</fullName>
        <shortName>CANP D</shortName>
    </alternativeName>
    <alternativeName>
        <fullName>Small optic lobes protein</fullName>
    </alternativeName>
</protein>
<evidence type="ECO:0000250" key="1"/>
<evidence type="ECO:0000255" key="2">
    <source>
        <dbReference type="PROSITE-ProRule" id="PRU00239"/>
    </source>
</evidence>
<evidence type="ECO:0000255" key="3">
    <source>
        <dbReference type="PROSITE-ProRule" id="PRU00322"/>
    </source>
</evidence>
<evidence type="ECO:0000256" key="4">
    <source>
        <dbReference type="SAM" id="MobiDB-lite"/>
    </source>
</evidence>
<evidence type="ECO:0000269" key="5">
    <source>
    </source>
</evidence>
<evidence type="ECO:0000269" key="6">
    <source>
    </source>
</evidence>
<evidence type="ECO:0000303" key="7">
    <source>
    </source>
</evidence>
<evidence type="ECO:0000305" key="8"/>
<evidence type="ECO:0000312" key="9">
    <source>
        <dbReference type="FlyBase" id="FBgn0003464"/>
    </source>
</evidence>
<gene>
    <name type="primary">sol</name>
    <name type="synonym">CalpD</name>
    <name type="ORF">CG1391</name>
</gene>
<sequence length="1594" mass="174313">MGTISSVLQWSCTKCNTINPTESLKCFNCGTVRKVFPQQQQQQHRSSSITASWTADDALEQEQAEKGQERDKEKGRAAVARSEYKHVYKSLLRGCLKRPQRNSQNLPANCVDCEDTRKYIKSSIELYRHFSNPALNRRWVCHACGTDNSSVTWHCLICDTVSYLAPIYKDAIAADRGQDLAGSLGNRGELLAADHSHPHHHHHYLHQELEEQHQHQLHSQHLHKRHLKGRSASGSGSGPGSGSGLRRTQSLSTAIDKSASGRSCHICYANNQSKDIFNLPQIKPAPQLTGIPPVAACSNSRFAIANDTFCRRKQNNNNKNQNHKVVRESGAKRKYNFTITTLSRSAAKDAGHGQMKPLRQVVNLNLNLQQEPQQKSPANPQQLQRKTQREPAAVSMNPTQFTIPRNGVFIAVNEWSEPMASSSSVSSSSNHHHHHHSNSNSNSSGNSNIINNNSSSSSGSNKLYENECVALAQQQLRAAAAQAAQAAATAVAIASSPSAKAMAEPAPTATMPIYAQVNKQHKLKKKQQIASESQTNNNTGSGEIADAVSESLTAGLGTSTDGSGEASESESQVEEHSIYAKVWKGPRKATESKIMHDPGSSSRLSGAASAAAGTASAGAIAAAVGAAAASRHDNKTQLGNGSRSKMWICIKCSYAYNRLWLQTCEMCEAKAEQQQQQLQLQQQQQQQQQHHHHHLQQQQAEAPRDEPWTCKKCTLVNYSTAMACVVCGGSKLKSISSIEDMTLRKGEFWTCSHCTLKNSLHSPVCSACKSHRQPQLSMAMEAVRERPDGQSYEEQDAAAVGGGGGSAHQSGANEVKAPTALNLPLTSVALPMPMLQLPTSTAAGLRGSRSPSPRMQLLPSLQQQRNSSSSGAIPKRHSTGGSIVPRNISIAGLANYNLQQGQGVGSASVVSASGAGSGAGAVGASTSTKKWQCPACTYDNCAASVVCDICSSPRGLASAVLGEALGRKSVRVALTPADIRQESKLMENLRQLEETEALTKWQNIIQYCRDNSELFVDDSFPPAPKSLYYNPASGAGEGNPVVQWRRPHEINCDGGAYPPWAVFRTPLPSDICQGVLGNCWLLSALAVLAEREDLVKEVLVTKEICGQGAYQVRLCKDGKWTTVLVDDLLPCDKRGHLVYSQAKRKQLWVPLIEKAVAKIHGCYEALVSGRAIEGLATLTGAPCESIPLQASSLPMPSEDELDKDLIWAQLLSSRCVRFLMGASCGGGNMKVDEEEYQQKGLRPRHAYSVLDVKDIQGHRLLKLRNPWGHYSWRGDWSDDSSLWTDDLRDALMPHGASEGVFWISFEDVLNYFDCIDICKVRSGWNEVRLQGTLQPLCSISCVLLTVLEPTEAEFTLFQEGQRNSEKSQRSQLDLCVVIFRTRSPAAPEIGRLVEHSKRQVRGFVGCHKMLERDIYLLVCLAFNHWHTGIEDPHQYPQCILAIHSSKRLLVEQISPSPHLLADAIISLTLTKGQRHEGREGMTAYYLTKGWAGLVVMVENRHENKWIHVKCDCQESYNVVSTRGELKTVDSVPPLQRQVIIVLTQLEGSGGFSIAHRLTHRLANSRGLHDWGPPGATHCPPIENVHGLHAPRLIT</sequence>
<comment type="function">
    <text evidence="5">Has a role in eye development.</text>
</comment>
<comment type="function">
    <text evidence="1">Calcium-regulated non-lysosomal thiol-protease.</text>
</comment>
<comment type="alternative products">
    <event type="alternative splicing"/>
    <isoform>
        <id>P27398-1</id>
        <name evidence="9">B</name>
        <sequence type="displayed"/>
    </isoform>
    <isoform>
        <id>P27398-2</id>
        <name evidence="9">A</name>
        <sequence type="described" ref="VSP_011791 VSP_005246"/>
    </isoform>
    <isoform>
        <id>P27398-5</id>
        <name evidence="9">E</name>
        <sequence type="described" ref="VSP_058143"/>
    </isoform>
</comment>
<comment type="developmental stage">
    <text evidence="5">Present throughout development, with expression levels lower in larvae than other life stages.</text>
</comment>
<comment type="disruption phenotype">
    <text evidence="5">Mutants cause specific cells to degenerate in the developing optic lobes, resulting in the absence of certain classes of columnar neurons.</text>
</comment>
<comment type="miscellaneous">
    <text>Although homology to other calpains is high within the protease domain, the lack of calcium-binding sites suggests that this protein is a protease that may not be activated by calcium ions.</text>
</comment>
<comment type="similarity">
    <text evidence="8">Belongs to the peptidase C2 family.</text>
</comment>
<comment type="sequence caution" evidence="8">
    <conflict type="erroneous gene model prediction">
        <sequence resource="EMBL-CDS" id="AAS65411"/>
    </conflict>
</comment>
<feature type="chain" id="PRO_0000207733" description="Calpain-D">
    <location>
        <begin position="1"/>
        <end position="1594"/>
    </location>
</feature>
<feature type="domain" description="Calpain catalytic" evidence="2">
    <location>
        <begin position="1014"/>
        <end position="1321"/>
    </location>
</feature>
<feature type="zinc finger region" description="RanBP2-type 1" evidence="3">
    <location>
        <begin position="1"/>
        <end position="35"/>
    </location>
</feature>
<feature type="zinc finger region" description="RanBP2-type 2" evidence="3">
    <location>
        <begin position="135"/>
        <end position="164"/>
    </location>
</feature>
<feature type="zinc finger region" description="RanBP2-type 3" evidence="3">
    <location>
        <begin position="643"/>
        <end position="673"/>
    </location>
</feature>
<feature type="zinc finger region" description="RanBP2-type 4" evidence="3">
    <location>
        <begin position="704"/>
        <end position="733"/>
    </location>
</feature>
<feature type="zinc finger region" description="RanBP2-type 5" evidence="3">
    <location>
        <begin position="744"/>
        <end position="774"/>
    </location>
</feature>
<feature type="zinc finger region" description="RanBP2-type 6" evidence="3">
    <location>
        <begin position="927"/>
        <end position="956"/>
    </location>
</feature>
<feature type="region of interest" description="Disordered" evidence="4">
    <location>
        <begin position="210"/>
        <end position="256"/>
    </location>
</feature>
<feature type="region of interest" description="Disordered" evidence="4">
    <location>
        <begin position="371"/>
        <end position="400"/>
    </location>
</feature>
<feature type="region of interest" description="Disordered" evidence="4">
    <location>
        <begin position="420"/>
        <end position="459"/>
    </location>
</feature>
<feature type="region of interest" description="Disordered" evidence="4">
    <location>
        <begin position="524"/>
        <end position="543"/>
    </location>
</feature>
<feature type="region of interest" description="Disordered" evidence="4">
    <location>
        <begin position="554"/>
        <end position="606"/>
    </location>
</feature>
<feature type="region of interest" description="Disordered" evidence="4">
    <location>
        <begin position="684"/>
        <end position="703"/>
    </location>
</feature>
<feature type="region of interest" description="Disordered" evidence="4">
    <location>
        <begin position="786"/>
        <end position="811"/>
    </location>
</feature>
<feature type="region of interest" description="Disordered" evidence="4">
    <location>
        <begin position="860"/>
        <end position="884"/>
    </location>
</feature>
<feature type="compositionally biased region" description="Basic residues" evidence="4">
    <location>
        <begin position="215"/>
        <end position="229"/>
    </location>
</feature>
<feature type="compositionally biased region" description="Polar residues" evidence="4">
    <location>
        <begin position="246"/>
        <end position="255"/>
    </location>
</feature>
<feature type="compositionally biased region" description="Polar residues" evidence="4">
    <location>
        <begin position="371"/>
        <end position="385"/>
    </location>
</feature>
<feature type="compositionally biased region" description="Low complexity" evidence="4">
    <location>
        <begin position="438"/>
        <end position="459"/>
    </location>
</feature>
<feature type="compositionally biased region" description="Polar residues" evidence="4">
    <location>
        <begin position="528"/>
        <end position="541"/>
    </location>
</feature>
<feature type="compositionally biased region" description="Polar residues" evidence="4">
    <location>
        <begin position="860"/>
        <end position="871"/>
    </location>
</feature>
<feature type="active site" evidence="1">
    <location>
        <position position="1079"/>
    </location>
</feature>
<feature type="active site" evidence="1">
    <location>
        <position position="1245"/>
    </location>
</feature>
<feature type="active site" evidence="1">
    <location>
        <position position="1265"/>
    </location>
</feature>
<feature type="modified residue" description="Phosphoserine" evidence="6">
    <location>
        <position position="250"/>
    </location>
</feature>
<feature type="splice variant" id="VSP_011791" description="In isoform A." evidence="7">
    <original>VS</original>
    <variation>YA</variation>
    <location>
        <begin position="394"/>
        <end position="395"/>
    </location>
</feature>
<feature type="splice variant" id="VSP_005246" description="In isoform A." evidence="7">
    <location>
        <begin position="396"/>
        <end position="1594"/>
    </location>
</feature>
<feature type="splice variant" id="VSP_058143" description="In isoform E." evidence="8">
    <location>
        <position position="701"/>
    </location>
</feature>
<feature type="sequence conflict" description="In Ref. 1; AAB95431." evidence="8" ref="1">
    <original>Q</original>
    <variation>H</variation>
    <location>
        <position position="384"/>
    </location>
</feature>
<feature type="sequence conflict" description="In Ref. 1; AAB95431." evidence="8" ref="1">
    <original>A</original>
    <variation>G</variation>
    <location>
        <position position="623"/>
    </location>
</feature>
<feature type="sequence conflict" description="In Ref. 1; AAB95431." evidence="8" ref="1">
    <original>Q</original>
    <variation>H</variation>
    <location>
        <position position="679"/>
    </location>
</feature>
<feature type="sequence conflict" description="In Ref. 1; AAB95431 and 2; AAC28409." evidence="8" ref="1 2">
    <original>H</original>
    <variation>HHHH</variation>
    <location>
        <position position="694"/>
    </location>
</feature>
<feature type="sequence conflict" description="In Ref. 5; AAM75061." evidence="8" ref="5">
    <original>Q</original>
    <variation>R</variation>
    <location>
        <position position="836"/>
    </location>
</feature>
<feature type="sequence conflict" description="In Ref. 2; AAC28409." evidence="8" ref="2">
    <original>A</original>
    <variation>G</variation>
    <location>
        <position position="915"/>
    </location>
</feature>
<feature type="sequence conflict" description="In Ref. 1; AAB95431 and 2; AAC28409." evidence="8" ref="1 2">
    <original>T</original>
    <variation>S</variation>
    <location>
        <position position="928"/>
    </location>
</feature>
<proteinExistence type="evidence at protein level"/>
<reference key="1">
    <citation type="journal article" date="1991" name="Proc. Natl. Acad. Sci. U.S.A.">
        <title>Molecular cloning and analysis of small optic lobes, a structural brain gene of Drosophila melanogaster.</title>
        <authorList>
            <person name="Delaney S.J."/>
            <person name="Hayward D.C."/>
            <person name="Barleben F."/>
            <person name="Fischbach K.-F."/>
            <person name="Miklos G.L.G."/>
        </authorList>
    </citation>
    <scope>NUCLEOTIDE SEQUENCE [MRNA] (ISOFORMS A AND B)</scope>
    <scope>FUNCTION</scope>
    <scope>DEVELOPMENTAL STAGE</scope>
    <scope>DISRUPTION PHENOTYPE</scope>
    <source>
        <strain>Canton-S</strain>
        <tissue>Brain</tissue>
    </source>
</reference>
<reference key="2">
    <citation type="journal article" date="1997" name="Proc. Natl. Acad. Sci. U.S.A.">
        <title>An essential cell division gene of Drosophila, absent from Saccharomyces, encodes an unusual protein with tubulin-like and myosin-like peptide motifs.</title>
        <authorList>
            <person name="Miklos G.L."/>
            <person name="Yamamoto M.-T."/>
            <person name="Burns R.G."/>
            <person name="Maleszka R."/>
        </authorList>
    </citation>
    <scope>NUCLEOTIDE SEQUENCE [GENOMIC DNA] (ISOFORM B)</scope>
    <source>
        <strain>Canton-S</strain>
    </source>
</reference>
<reference key="3">
    <citation type="journal article" date="2000" name="Science">
        <title>The genome sequence of Drosophila melanogaster.</title>
        <authorList>
            <person name="Adams M.D."/>
            <person name="Celniker S.E."/>
            <person name="Holt R.A."/>
            <person name="Evans C.A."/>
            <person name="Gocayne J.D."/>
            <person name="Amanatides P.G."/>
            <person name="Scherer S.E."/>
            <person name="Li P.W."/>
            <person name="Hoskins R.A."/>
            <person name="Galle R.F."/>
            <person name="George R.A."/>
            <person name="Lewis S.E."/>
            <person name="Richards S."/>
            <person name="Ashburner M."/>
            <person name="Henderson S.N."/>
            <person name="Sutton G.G."/>
            <person name="Wortman J.R."/>
            <person name="Yandell M.D."/>
            <person name="Zhang Q."/>
            <person name="Chen L.X."/>
            <person name="Brandon R.C."/>
            <person name="Rogers Y.-H.C."/>
            <person name="Blazej R.G."/>
            <person name="Champe M."/>
            <person name="Pfeiffer B.D."/>
            <person name="Wan K.H."/>
            <person name="Doyle C."/>
            <person name="Baxter E.G."/>
            <person name="Helt G."/>
            <person name="Nelson C.R."/>
            <person name="Miklos G.L.G."/>
            <person name="Abril J.F."/>
            <person name="Agbayani A."/>
            <person name="An H.-J."/>
            <person name="Andrews-Pfannkoch C."/>
            <person name="Baldwin D."/>
            <person name="Ballew R.M."/>
            <person name="Basu A."/>
            <person name="Baxendale J."/>
            <person name="Bayraktaroglu L."/>
            <person name="Beasley E.M."/>
            <person name="Beeson K.Y."/>
            <person name="Benos P.V."/>
            <person name="Berman B.P."/>
            <person name="Bhandari D."/>
            <person name="Bolshakov S."/>
            <person name="Borkova D."/>
            <person name="Botchan M.R."/>
            <person name="Bouck J."/>
            <person name="Brokstein P."/>
            <person name="Brottier P."/>
            <person name="Burtis K.C."/>
            <person name="Busam D.A."/>
            <person name="Butler H."/>
            <person name="Cadieu E."/>
            <person name="Center A."/>
            <person name="Chandra I."/>
            <person name="Cherry J.M."/>
            <person name="Cawley S."/>
            <person name="Dahlke C."/>
            <person name="Davenport L.B."/>
            <person name="Davies P."/>
            <person name="de Pablos B."/>
            <person name="Delcher A."/>
            <person name="Deng Z."/>
            <person name="Mays A.D."/>
            <person name="Dew I."/>
            <person name="Dietz S.M."/>
            <person name="Dodson K."/>
            <person name="Doup L.E."/>
            <person name="Downes M."/>
            <person name="Dugan-Rocha S."/>
            <person name="Dunkov B.C."/>
            <person name="Dunn P."/>
            <person name="Durbin K.J."/>
            <person name="Evangelista C.C."/>
            <person name="Ferraz C."/>
            <person name="Ferriera S."/>
            <person name="Fleischmann W."/>
            <person name="Fosler C."/>
            <person name="Gabrielian A.E."/>
            <person name="Garg N.S."/>
            <person name="Gelbart W.M."/>
            <person name="Glasser K."/>
            <person name="Glodek A."/>
            <person name="Gong F."/>
            <person name="Gorrell J.H."/>
            <person name="Gu Z."/>
            <person name="Guan P."/>
            <person name="Harris M."/>
            <person name="Harris N.L."/>
            <person name="Harvey D.A."/>
            <person name="Heiman T.J."/>
            <person name="Hernandez J.R."/>
            <person name="Houck J."/>
            <person name="Hostin D."/>
            <person name="Houston K.A."/>
            <person name="Howland T.J."/>
            <person name="Wei M.-H."/>
            <person name="Ibegwam C."/>
            <person name="Jalali M."/>
            <person name="Kalush F."/>
            <person name="Karpen G.H."/>
            <person name="Ke Z."/>
            <person name="Kennison J.A."/>
            <person name="Ketchum K.A."/>
            <person name="Kimmel B.E."/>
            <person name="Kodira C.D."/>
            <person name="Kraft C.L."/>
            <person name="Kravitz S."/>
            <person name="Kulp D."/>
            <person name="Lai Z."/>
            <person name="Lasko P."/>
            <person name="Lei Y."/>
            <person name="Levitsky A.A."/>
            <person name="Li J.H."/>
            <person name="Li Z."/>
            <person name="Liang Y."/>
            <person name="Lin X."/>
            <person name="Liu X."/>
            <person name="Mattei B."/>
            <person name="McIntosh T.C."/>
            <person name="McLeod M.P."/>
            <person name="McPherson D."/>
            <person name="Merkulov G."/>
            <person name="Milshina N.V."/>
            <person name="Mobarry C."/>
            <person name="Morris J."/>
            <person name="Moshrefi A."/>
            <person name="Mount S.M."/>
            <person name="Moy M."/>
            <person name="Murphy B."/>
            <person name="Murphy L."/>
            <person name="Muzny D.M."/>
            <person name="Nelson D.L."/>
            <person name="Nelson D.R."/>
            <person name="Nelson K.A."/>
            <person name="Nixon K."/>
            <person name="Nusskern D.R."/>
            <person name="Pacleb J.M."/>
            <person name="Palazzolo M."/>
            <person name="Pittman G.S."/>
            <person name="Pan S."/>
            <person name="Pollard J."/>
            <person name="Puri V."/>
            <person name="Reese M.G."/>
            <person name="Reinert K."/>
            <person name="Remington K."/>
            <person name="Saunders R.D.C."/>
            <person name="Scheeler F."/>
            <person name="Shen H."/>
            <person name="Shue B.C."/>
            <person name="Siden-Kiamos I."/>
            <person name="Simpson M."/>
            <person name="Skupski M.P."/>
            <person name="Smith T.J."/>
            <person name="Spier E."/>
            <person name="Spradling A.C."/>
            <person name="Stapleton M."/>
            <person name="Strong R."/>
            <person name="Sun E."/>
            <person name="Svirskas R."/>
            <person name="Tector C."/>
            <person name="Turner R."/>
            <person name="Venter E."/>
            <person name="Wang A.H."/>
            <person name="Wang X."/>
            <person name="Wang Z.-Y."/>
            <person name="Wassarman D.A."/>
            <person name="Weinstock G.M."/>
            <person name="Weissenbach J."/>
            <person name="Williams S.M."/>
            <person name="Woodage T."/>
            <person name="Worley K.C."/>
            <person name="Wu D."/>
            <person name="Yang S."/>
            <person name="Yao Q.A."/>
            <person name="Ye J."/>
            <person name="Yeh R.-F."/>
            <person name="Zaveri J.S."/>
            <person name="Zhan M."/>
            <person name="Zhang G."/>
            <person name="Zhao Q."/>
            <person name="Zheng L."/>
            <person name="Zheng X.H."/>
            <person name="Zhong F.N."/>
            <person name="Zhong W."/>
            <person name="Zhou X."/>
            <person name="Zhu S.C."/>
            <person name="Zhu X."/>
            <person name="Smith H.O."/>
            <person name="Gibbs R.A."/>
            <person name="Myers E.W."/>
            <person name="Rubin G.M."/>
            <person name="Venter J.C."/>
        </authorList>
    </citation>
    <scope>NUCLEOTIDE SEQUENCE [LARGE SCALE GENOMIC DNA]</scope>
    <source>
        <strain>Berkeley</strain>
    </source>
</reference>
<reference key="4">
    <citation type="journal article" date="2002" name="Genome Biol.">
        <title>Annotation of the Drosophila melanogaster euchromatic genome: a systematic review.</title>
        <authorList>
            <person name="Misra S."/>
            <person name="Crosby M.A."/>
            <person name="Mungall C.J."/>
            <person name="Matthews B.B."/>
            <person name="Campbell K.S."/>
            <person name="Hradecky P."/>
            <person name="Huang Y."/>
            <person name="Kaminker J.S."/>
            <person name="Millburn G.H."/>
            <person name="Prochnik S.E."/>
            <person name="Smith C.D."/>
            <person name="Tupy J.L."/>
            <person name="Whitfield E.J."/>
            <person name="Bayraktaroglu L."/>
            <person name="Berman B.P."/>
            <person name="Bettencourt B.R."/>
            <person name="Celniker S.E."/>
            <person name="de Grey A.D.N.J."/>
            <person name="Drysdale R.A."/>
            <person name="Harris N.L."/>
            <person name="Richter J."/>
            <person name="Russo S."/>
            <person name="Schroeder A.J."/>
            <person name="Shu S.Q."/>
            <person name="Stapleton M."/>
            <person name="Yamada C."/>
            <person name="Ashburner M."/>
            <person name="Gelbart W.M."/>
            <person name="Rubin G.M."/>
            <person name="Lewis S.E."/>
        </authorList>
    </citation>
    <scope>GENOME REANNOTATION</scope>
    <scope>ALTERNATIVE SPLICING</scope>
    <source>
        <strain>Berkeley</strain>
    </source>
</reference>
<reference key="5">
    <citation type="journal article" date="2002" name="Genome Biol.">
        <title>A Drosophila full-length cDNA resource.</title>
        <authorList>
            <person name="Stapleton M."/>
            <person name="Carlson J.W."/>
            <person name="Brokstein P."/>
            <person name="Yu C."/>
            <person name="Champe M."/>
            <person name="George R.A."/>
            <person name="Guarin H."/>
            <person name="Kronmiller B."/>
            <person name="Pacleb J.M."/>
            <person name="Park S."/>
            <person name="Wan K.H."/>
            <person name="Rubin G.M."/>
            <person name="Celniker S.E."/>
        </authorList>
    </citation>
    <scope>NUCLEOTIDE SEQUENCE [LARGE SCALE MRNA] (ISOFORM B)</scope>
    <source>
        <strain>Berkeley</strain>
        <tissue>Embryo</tissue>
    </source>
</reference>
<reference key="6">
    <citation type="journal article" date="2008" name="J. Proteome Res.">
        <title>Phosphoproteome analysis of Drosophila melanogaster embryos.</title>
        <authorList>
            <person name="Zhai B."/>
            <person name="Villen J."/>
            <person name="Beausoleil S.A."/>
            <person name="Mintseris J."/>
            <person name="Gygi S.P."/>
        </authorList>
    </citation>
    <scope>PHOSPHORYLATION [LARGE SCALE ANALYSIS] AT SER-250</scope>
    <scope>IDENTIFICATION BY MASS SPECTROMETRY</scope>
    <source>
        <tissue>Embryo</tissue>
    </source>
</reference>
<organism>
    <name type="scientific">Drosophila melanogaster</name>
    <name type="common">Fruit fly</name>
    <dbReference type="NCBI Taxonomy" id="7227"/>
    <lineage>
        <taxon>Eukaryota</taxon>
        <taxon>Metazoa</taxon>
        <taxon>Ecdysozoa</taxon>
        <taxon>Arthropoda</taxon>
        <taxon>Hexapoda</taxon>
        <taxon>Insecta</taxon>
        <taxon>Pterygota</taxon>
        <taxon>Neoptera</taxon>
        <taxon>Endopterygota</taxon>
        <taxon>Diptera</taxon>
        <taxon>Brachycera</taxon>
        <taxon>Muscomorpha</taxon>
        <taxon>Ephydroidea</taxon>
        <taxon>Drosophilidae</taxon>
        <taxon>Drosophila</taxon>
        <taxon>Sophophora</taxon>
    </lineage>
</organism>
<accession>P27398</accession>
<accession>O61346</accession>
<accession>Q7KU57</accession>
<accession>Q7KU58</accession>
<accession>Q8MQP3</accession>
<accession>Q9VRH3</accession>
<accession>Q9VRH4</accession>
<keyword id="KW-0025">Alternative splicing</keyword>
<keyword id="KW-0217">Developmental protein</keyword>
<keyword id="KW-0378">Hydrolase</keyword>
<keyword id="KW-0479">Metal-binding</keyword>
<keyword id="KW-0597">Phosphoprotein</keyword>
<keyword id="KW-0645">Protease</keyword>
<keyword id="KW-1185">Reference proteome</keyword>
<keyword id="KW-0677">Repeat</keyword>
<keyword id="KW-0716">Sensory transduction</keyword>
<keyword id="KW-0788">Thiol protease</keyword>
<keyword id="KW-0844">Vision</keyword>
<keyword id="KW-0862">Zinc</keyword>
<keyword id="KW-0863">Zinc-finger</keyword>
<dbReference type="EC" id="3.4.22.-"/>
<dbReference type="EMBL" id="M64084">
    <property type="protein sequence ID" value="AAB95431.1"/>
    <property type="molecule type" value="mRNA"/>
</dbReference>
<dbReference type="EMBL" id="AF017777">
    <property type="protein sequence ID" value="AAC28409.1"/>
    <property type="molecule type" value="Genomic_DNA"/>
</dbReference>
<dbReference type="EMBL" id="AE014298">
    <property type="protein sequence ID" value="AAF50826.4"/>
    <property type="molecule type" value="Genomic_DNA"/>
</dbReference>
<dbReference type="EMBL" id="AE014298">
    <property type="protein sequence ID" value="AAF50827.3"/>
    <property type="molecule type" value="Genomic_DNA"/>
</dbReference>
<dbReference type="EMBL" id="AE014298">
    <property type="protein sequence ID" value="AAS65411.2"/>
    <property type="status" value="ALT_SEQ"/>
    <property type="molecule type" value="Genomic_DNA"/>
</dbReference>
<dbReference type="EMBL" id="AY128468">
    <property type="protein sequence ID" value="AAM75061.1"/>
    <property type="molecule type" value="mRNA"/>
</dbReference>
<dbReference type="PIR" id="A41146">
    <property type="entry name" value="BVFFSL"/>
</dbReference>
<dbReference type="PIR" id="T08428">
    <property type="entry name" value="T08428"/>
</dbReference>
<dbReference type="RefSeq" id="NP_001162813.1">
    <molecule id="P27398-5"/>
    <property type="nucleotide sequence ID" value="NM_001169342.2"/>
</dbReference>
<dbReference type="RefSeq" id="NP_476737.3">
    <molecule id="P27398-2"/>
    <property type="nucleotide sequence ID" value="NM_057389.6"/>
</dbReference>
<dbReference type="RefSeq" id="NP_476738.3">
    <molecule id="P27398-1"/>
    <property type="nucleotide sequence ID" value="NM_057390.6"/>
</dbReference>
<dbReference type="RefSeq" id="NP_996524.2">
    <property type="nucleotide sequence ID" value="NM_206801.3"/>
</dbReference>
<dbReference type="SMR" id="P27398"/>
<dbReference type="BioGRID" id="68777">
    <property type="interactions" value="80"/>
</dbReference>
<dbReference type="FunCoup" id="P27398">
    <property type="interactions" value="409"/>
</dbReference>
<dbReference type="IntAct" id="P27398">
    <property type="interactions" value="14"/>
</dbReference>
<dbReference type="STRING" id="7227.FBpp0088620"/>
<dbReference type="MEROPS" id="C02.010"/>
<dbReference type="iPTMnet" id="P27398"/>
<dbReference type="PaxDb" id="7227-FBpp0088620"/>
<dbReference type="DNASU" id="44014"/>
<dbReference type="EnsemblMetazoa" id="FBtr0089678">
    <molecule id="P27398-1"/>
    <property type="protein sequence ID" value="FBpp0088620"/>
    <property type="gene ID" value="FBgn0003464"/>
</dbReference>
<dbReference type="EnsemblMetazoa" id="FBtr0089679">
    <molecule id="P27398-2"/>
    <property type="protein sequence ID" value="FBpp0088621"/>
    <property type="gene ID" value="FBgn0003464"/>
</dbReference>
<dbReference type="EnsemblMetazoa" id="FBtr0301583">
    <molecule id="P27398-5"/>
    <property type="protein sequence ID" value="FBpp0290798"/>
    <property type="gene ID" value="FBgn0003464"/>
</dbReference>
<dbReference type="GeneID" id="44014"/>
<dbReference type="KEGG" id="dme:Dmel_CG1391"/>
<dbReference type="AGR" id="FB:FBgn0003464"/>
<dbReference type="CTD" id="44014"/>
<dbReference type="FlyBase" id="FBgn0003464">
    <property type="gene designation" value="sol"/>
</dbReference>
<dbReference type="VEuPathDB" id="VectorBase:FBgn0003464"/>
<dbReference type="eggNOG" id="KOG0045">
    <property type="taxonomic scope" value="Eukaryota"/>
</dbReference>
<dbReference type="GeneTree" id="ENSGT00940000158312"/>
<dbReference type="InParanoid" id="P27398"/>
<dbReference type="OMA" id="PGHVYKS"/>
<dbReference type="OrthoDB" id="424753at2759"/>
<dbReference type="PhylomeDB" id="P27398"/>
<dbReference type="BRENDA" id="3.4.22.B35">
    <property type="organism ID" value="1994"/>
</dbReference>
<dbReference type="SignaLink" id="P27398"/>
<dbReference type="BioGRID-ORCS" id="44014">
    <property type="hits" value="0 hits in 1 CRISPR screen"/>
</dbReference>
<dbReference type="GenomeRNAi" id="44014"/>
<dbReference type="PRO" id="PR:P27398"/>
<dbReference type="Proteomes" id="UP000000803">
    <property type="component" value="Chromosome X"/>
</dbReference>
<dbReference type="Bgee" id="FBgn0003464">
    <property type="expression patterns" value="Expressed in intestinal stem cell (Drosophila) in digestive tract and 216 other cell types or tissues"/>
</dbReference>
<dbReference type="ExpressionAtlas" id="P27398">
    <property type="expression patterns" value="baseline and differential"/>
</dbReference>
<dbReference type="GO" id="GO:0005737">
    <property type="term" value="C:cytoplasm"/>
    <property type="evidence" value="ECO:0000318"/>
    <property type="project" value="GO_Central"/>
</dbReference>
<dbReference type="GO" id="GO:0004198">
    <property type="term" value="F:calcium-dependent cysteine-type endopeptidase activity"/>
    <property type="evidence" value="ECO:0000250"/>
    <property type="project" value="UniProtKB"/>
</dbReference>
<dbReference type="GO" id="GO:0008270">
    <property type="term" value="F:zinc ion binding"/>
    <property type="evidence" value="ECO:0007669"/>
    <property type="project" value="UniProtKB-KW"/>
</dbReference>
<dbReference type="GO" id="GO:0007399">
    <property type="term" value="P:nervous system development"/>
    <property type="evidence" value="ECO:0000315"/>
    <property type="project" value="UniProtKB"/>
</dbReference>
<dbReference type="GO" id="GO:0006508">
    <property type="term" value="P:proteolysis"/>
    <property type="evidence" value="ECO:0000250"/>
    <property type="project" value="UniProtKB"/>
</dbReference>
<dbReference type="GO" id="GO:0007601">
    <property type="term" value="P:visual perception"/>
    <property type="evidence" value="ECO:0007669"/>
    <property type="project" value="UniProtKB-KW"/>
</dbReference>
<dbReference type="CDD" id="cd00044">
    <property type="entry name" value="CysPc"/>
    <property type="match status" value="1"/>
</dbReference>
<dbReference type="FunFam" id="3.90.70.10:FF:000010">
    <property type="entry name" value="Calpain 15"/>
    <property type="match status" value="1"/>
</dbReference>
<dbReference type="FunFam" id="2.30.30.380:FF:000022">
    <property type="entry name" value="calpain-D isoform X3"/>
    <property type="match status" value="1"/>
</dbReference>
<dbReference type="Gene3D" id="3.90.70.10">
    <property type="entry name" value="Cysteine proteinases"/>
    <property type="match status" value="1"/>
</dbReference>
<dbReference type="Gene3D" id="4.10.1060.10">
    <property type="entry name" value="Zinc finger, RanBP2-type"/>
    <property type="match status" value="1"/>
</dbReference>
<dbReference type="Gene3D" id="2.30.30.380">
    <property type="entry name" value="Zn-finger domain of Sec23/24"/>
    <property type="match status" value="3"/>
</dbReference>
<dbReference type="InterPro" id="IPR022684">
    <property type="entry name" value="Calpain_cysteine_protease"/>
</dbReference>
<dbReference type="InterPro" id="IPR038765">
    <property type="entry name" value="Papain-like_cys_pep_sf"/>
</dbReference>
<dbReference type="InterPro" id="IPR000169">
    <property type="entry name" value="Pept_cys_AS"/>
</dbReference>
<dbReference type="InterPro" id="IPR001300">
    <property type="entry name" value="Peptidase_C2_calpain_cat"/>
</dbReference>
<dbReference type="InterPro" id="IPR001876">
    <property type="entry name" value="Znf_RanBP2"/>
</dbReference>
<dbReference type="InterPro" id="IPR036443">
    <property type="entry name" value="Znf_RanBP2_sf"/>
</dbReference>
<dbReference type="PANTHER" id="PTHR10183">
    <property type="entry name" value="CALPAIN"/>
    <property type="match status" value="1"/>
</dbReference>
<dbReference type="PANTHER" id="PTHR10183:SF382">
    <property type="entry name" value="CALPAIN-15"/>
    <property type="match status" value="1"/>
</dbReference>
<dbReference type="Pfam" id="PF00648">
    <property type="entry name" value="Peptidase_C2"/>
    <property type="match status" value="1"/>
</dbReference>
<dbReference type="Pfam" id="PF00641">
    <property type="entry name" value="Zn_ribbon_RanBP"/>
    <property type="match status" value="6"/>
</dbReference>
<dbReference type="PRINTS" id="PR00704">
    <property type="entry name" value="CALPAIN"/>
</dbReference>
<dbReference type="SMART" id="SM00230">
    <property type="entry name" value="CysPc"/>
    <property type="match status" value="1"/>
</dbReference>
<dbReference type="SMART" id="SM00547">
    <property type="entry name" value="ZnF_RBZ"/>
    <property type="match status" value="6"/>
</dbReference>
<dbReference type="SUPFAM" id="SSF54001">
    <property type="entry name" value="Cysteine proteinases"/>
    <property type="match status" value="1"/>
</dbReference>
<dbReference type="SUPFAM" id="SSF90209">
    <property type="entry name" value="Ran binding protein zinc finger-like"/>
    <property type="match status" value="1"/>
</dbReference>
<dbReference type="PROSITE" id="PS50203">
    <property type="entry name" value="CALPAIN_CAT"/>
    <property type="match status" value="1"/>
</dbReference>
<dbReference type="PROSITE" id="PS00139">
    <property type="entry name" value="THIOL_PROTEASE_CYS"/>
    <property type="match status" value="1"/>
</dbReference>
<dbReference type="PROSITE" id="PS01358">
    <property type="entry name" value="ZF_RANBP2_1"/>
    <property type="match status" value="5"/>
</dbReference>
<dbReference type="PROSITE" id="PS50199">
    <property type="entry name" value="ZF_RANBP2_2"/>
    <property type="match status" value="4"/>
</dbReference>
<name>CAND_DROME</name>